<dbReference type="EC" id="2.7.4.9" evidence="1"/>
<dbReference type="EMBL" id="CP000554">
    <property type="protein sequence ID" value="ABM79379.1"/>
    <property type="molecule type" value="Genomic_DNA"/>
</dbReference>
<dbReference type="RefSeq" id="WP_011827222.1">
    <property type="nucleotide sequence ID" value="NC_008820.1"/>
</dbReference>
<dbReference type="SMR" id="A2CD19"/>
<dbReference type="STRING" id="59922.P9303_26491"/>
<dbReference type="KEGG" id="pmf:P9303_26491"/>
<dbReference type="HOGENOM" id="CLU_049131_0_0_3"/>
<dbReference type="BioCyc" id="PMAR59922:G1G80-2320-MONOMER"/>
<dbReference type="Proteomes" id="UP000002274">
    <property type="component" value="Chromosome"/>
</dbReference>
<dbReference type="GO" id="GO:0005829">
    <property type="term" value="C:cytosol"/>
    <property type="evidence" value="ECO:0007669"/>
    <property type="project" value="TreeGrafter"/>
</dbReference>
<dbReference type="GO" id="GO:0005524">
    <property type="term" value="F:ATP binding"/>
    <property type="evidence" value="ECO:0007669"/>
    <property type="project" value="UniProtKB-UniRule"/>
</dbReference>
<dbReference type="GO" id="GO:0004798">
    <property type="term" value="F:dTMP kinase activity"/>
    <property type="evidence" value="ECO:0007669"/>
    <property type="project" value="UniProtKB-UniRule"/>
</dbReference>
<dbReference type="GO" id="GO:0006233">
    <property type="term" value="P:dTDP biosynthetic process"/>
    <property type="evidence" value="ECO:0007669"/>
    <property type="project" value="InterPro"/>
</dbReference>
<dbReference type="GO" id="GO:0006235">
    <property type="term" value="P:dTTP biosynthetic process"/>
    <property type="evidence" value="ECO:0007669"/>
    <property type="project" value="UniProtKB-UniRule"/>
</dbReference>
<dbReference type="GO" id="GO:0006227">
    <property type="term" value="P:dUDP biosynthetic process"/>
    <property type="evidence" value="ECO:0007669"/>
    <property type="project" value="TreeGrafter"/>
</dbReference>
<dbReference type="CDD" id="cd01672">
    <property type="entry name" value="TMPK"/>
    <property type="match status" value="1"/>
</dbReference>
<dbReference type="FunFam" id="3.40.50.300:FF:000225">
    <property type="entry name" value="Thymidylate kinase"/>
    <property type="match status" value="1"/>
</dbReference>
<dbReference type="Gene3D" id="3.40.50.300">
    <property type="entry name" value="P-loop containing nucleotide triphosphate hydrolases"/>
    <property type="match status" value="1"/>
</dbReference>
<dbReference type="HAMAP" id="MF_00165">
    <property type="entry name" value="Thymidylate_kinase"/>
    <property type="match status" value="1"/>
</dbReference>
<dbReference type="InterPro" id="IPR027417">
    <property type="entry name" value="P-loop_NTPase"/>
</dbReference>
<dbReference type="InterPro" id="IPR039430">
    <property type="entry name" value="Thymidylate_kin-like_dom"/>
</dbReference>
<dbReference type="InterPro" id="IPR018095">
    <property type="entry name" value="Thymidylate_kin_CS"/>
</dbReference>
<dbReference type="InterPro" id="IPR018094">
    <property type="entry name" value="Thymidylate_kinase"/>
</dbReference>
<dbReference type="NCBIfam" id="TIGR00041">
    <property type="entry name" value="DTMP_kinase"/>
    <property type="match status" value="1"/>
</dbReference>
<dbReference type="PANTHER" id="PTHR10344">
    <property type="entry name" value="THYMIDYLATE KINASE"/>
    <property type="match status" value="1"/>
</dbReference>
<dbReference type="PANTHER" id="PTHR10344:SF4">
    <property type="entry name" value="UMP-CMP KINASE 2, MITOCHONDRIAL"/>
    <property type="match status" value="1"/>
</dbReference>
<dbReference type="Pfam" id="PF02223">
    <property type="entry name" value="Thymidylate_kin"/>
    <property type="match status" value="1"/>
</dbReference>
<dbReference type="SUPFAM" id="SSF52540">
    <property type="entry name" value="P-loop containing nucleoside triphosphate hydrolases"/>
    <property type="match status" value="1"/>
</dbReference>
<dbReference type="PROSITE" id="PS01331">
    <property type="entry name" value="THYMIDYLATE_KINASE"/>
    <property type="match status" value="1"/>
</dbReference>
<keyword id="KW-0067">ATP-binding</keyword>
<keyword id="KW-0418">Kinase</keyword>
<keyword id="KW-0545">Nucleotide biosynthesis</keyword>
<keyword id="KW-0547">Nucleotide-binding</keyword>
<keyword id="KW-0808">Transferase</keyword>
<evidence type="ECO:0000255" key="1">
    <source>
        <dbReference type="HAMAP-Rule" id="MF_00165"/>
    </source>
</evidence>
<gene>
    <name evidence="1" type="primary">tmk</name>
    <name type="ordered locus">P9303_26491</name>
</gene>
<sequence>MSGRLLVLEGIDGCGKTTQLRHLANWLPRSGLMPEGARLHLTREPGGTALGMALRKLVLHPPGDASPEPLAELLLYAADRAQHVAQLIRPALEQGHWVLSDRFSGSTLAYQGYGRELDLDLIQQLEQIATAGLVPDLTFWLELSVEESLVRRDARSNDRIEAEGVDFLTRVATGFAVLARERSWVPLQADQQVESVSSALESQLKHHFGPLQESMR</sequence>
<accession>A2CD19</accession>
<reference key="1">
    <citation type="journal article" date="2007" name="PLoS Genet.">
        <title>Patterns and implications of gene gain and loss in the evolution of Prochlorococcus.</title>
        <authorList>
            <person name="Kettler G.C."/>
            <person name="Martiny A.C."/>
            <person name="Huang K."/>
            <person name="Zucker J."/>
            <person name="Coleman M.L."/>
            <person name="Rodrigue S."/>
            <person name="Chen F."/>
            <person name="Lapidus A."/>
            <person name="Ferriera S."/>
            <person name="Johnson J."/>
            <person name="Steglich C."/>
            <person name="Church G.M."/>
            <person name="Richardson P."/>
            <person name="Chisholm S.W."/>
        </authorList>
    </citation>
    <scope>NUCLEOTIDE SEQUENCE [LARGE SCALE GENOMIC DNA]</scope>
    <source>
        <strain>MIT 9303</strain>
    </source>
</reference>
<proteinExistence type="inferred from homology"/>
<feature type="chain" id="PRO_1000023247" description="Thymidylate kinase">
    <location>
        <begin position="1"/>
        <end position="216"/>
    </location>
</feature>
<feature type="binding site" evidence="1">
    <location>
        <begin position="10"/>
        <end position="17"/>
    </location>
    <ligand>
        <name>ATP</name>
        <dbReference type="ChEBI" id="CHEBI:30616"/>
    </ligand>
</feature>
<name>KTHY_PROM3</name>
<organism>
    <name type="scientific">Prochlorococcus marinus (strain MIT 9303)</name>
    <dbReference type="NCBI Taxonomy" id="59922"/>
    <lineage>
        <taxon>Bacteria</taxon>
        <taxon>Bacillati</taxon>
        <taxon>Cyanobacteriota</taxon>
        <taxon>Cyanophyceae</taxon>
        <taxon>Synechococcales</taxon>
        <taxon>Prochlorococcaceae</taxon>
        <taxon>Prochlorococcus</taxon>
    </lineage>
</organism>
<protein>
    <recommendedName>
        <fullName evidence="1">Thymidylate kinase</fullName>
        <ecNumber evidence="1">2.7.4.9</ecNumber>
    </recommendedName>
    <alternativeName>
        <fullName evidence="1">dTMP kinase</fullName>
    </alternativeName>
</protein>
<comment type="function">
    <text evidence="1">Phosphorylation of dTMP to form dTDP in both de novo and salvage pathways of dTTP synthesis.</text>
</comment>
<comment type="catalytic activity">
    <reaction evidence="1">
        <text>dTMP + ATP = dTDP + ADP</text>
        <dbReference type="Rhea" id="RHEA:13517"/>
        <dbReference type="ChEBI" id="CHEBI:30616"/>
        <dbReference type="ChEBI" id="CHEBI:58369"/>
        <dbReference type="ChEBI" id="CHEBI:63528"/>
        <dbReference type="ChEBI" id="CHEBI:456216"/>
        <dbReference type="EC" id="2.7.4.9"/>
    </reaction>
</comment>
<comment type="similarity">
    <text evidence="1">Belongs to the thymidylate kinase family.</text>
</comment>